<name>PURL_BACVZ</name>
<keyword id="KW-0067">ATP-binding</keyword>
<keyword id="KW-0963">Cytoplasm</keyword>
<keyword id="KW-0436">Ligase</keyword>
<keyword id="KW-0460">Magnesium</keyword>
<keyword id="KW-0479">Metal-binding</keyword>
<keyword id="KW-0547">Nucleotide-binding</keyword>
<keyword id="KW-0658">Purine biosynthesis</keyword>
<proteinExistence type="inferred from homology"/>
<feature type="chain" id="PRO_1000050296" description="Phosphoribosylformylglycinamidine synthase subunit PurL">
    <location>
        <begin position="1"/>
        <end position="742"/>
    </location>
</feature>
<feature type="active site" evidence="1">
    <location>
        <position position="54"/>
    </location>
</feature>
<feature type="active site" description="Proton acceptor" evidence="1">
    <location>
        <position position="100"/>
    </location>
</feature>
<feature type="binding site" evidence="1">
    <location>
        <position position="57"/>
    </location>
    <ligand>
        <name>ATP</name>
        <dbReference type="ChEBI" id="CHEBI:30616"/>
    </ligand>
</feature>
<feature type="binding site" evidence="1">
    <location>
        <position position="96"/>
    </location>
    <ligand>
        <name>ATP</name>
        <dbReference type="ChEBI" id="CHEBI:30616"/>
    </ligand>
</feature>
<feature type="binding site" evidence="1">
    <location>
        <position position="98"/>
    </location>
    <ligand>
        <name>Mg(2+)</name>
        <dbReference type="ChEBI" id="CHEBI:18420"/>
        <label>1</label>
    </ligand>
</feature>
<feature type="binding site" evidence="1">
    <location>
        <begin position="99"/>
        <end position="102"/>
    </location>
    <ligand>
        <name>substrate</name>
    </ligand>
</feature>
<feature type="binding site" evidence="1">
    <location>
        <position position="121"/>
    </location>
    <ligand>
        <name>substrate</name>
    </ligand>
</feature>
<feature type="binding site" evidence="1">
    <location>
        <position position="122"/>
    </location>
    <ligand>
        <name>Mg(2+)</name>
        <dbReference type="ChEBI" id="CHEBI:18420"/>
        <label>2</label>
    </ligand>
</feature>
<feature type="binding site" evidence="1">
    <location>
        <position position="245"/>
    </location>
    <ligand>
        <name>substrate</name>
    </ligand>
</feature>
<feature type="binding site" evidence="1">
    <location>
        <position position="273"/>
    </location>
    <ligand>
        <name>Mg(2+)</name>
        <dbReference type="ChEBI" id="CHEBI:18420"/>
        <label>2</label>
    </ligand>
</feature>
<feature type="binding site" evidence="1">
    <location>
        <begin position="317"/>
        <end position="319"/>
    </location>
    <ligand>
        <name>substrate</name>
    </ligand>
</feature>
<feature type="binding site" evidence="1">
    <location>
        <position position="500"/>
    </location>
    <ligand>
        <name>ATP</name>
        <dbReference type="ChEBI" id="CHEBI:30616"/>
    </ligand>
</feature>
<feature type="binding site" evidence="1">
    <location>
        <position position="537"/>
    </location>
    <ligand>
        <name>ATP</name>
        <dbReference type="ChEBI" id="CHEBI:30616"/>
    </ligand>
</feature>
<feature type="binding site" evidence="1">
    <location>
        <position position="538"/>
    </location>
    <ligand>
        <name>Mg(2+)</name>
        <dbReference type="ChEBI" id="CHEBI:18420"/>
        <label>1</label>
    </ligand>
</feature>
<feature type="binding site" evidence="1">
    <location>
        <position position="540"/>
    </location>
    <ligand>
        <name>substrate</name>
    </ligand>
</feature>
<protein>
    <recommendedName>
        <fullName evidence="1">Phosphoribosylformylglycinamidine synthase subunit PurL</fullName>
        <shortName evidence="1">FGAM synthase</shortName>
        <ecNumber evidence="1">6.3.5.3</ecNumber>
    </recommendedName>
    <alternativeName>
        <fullName evidence="1">Formylglycinamide ribonucleotide amidotransferase subunit II</fullName>
        <shortName evidence="1">FGAR amidotransferase II</shortName>
        <shortName evidence="1">FGAR-AT II</shortName>
    </alternativeName>
    <alternativeName>
        <fullName evidence="1">Glutamine amidotransferase PurL</fullName>
    </alternativeName>
    <alternativeName>
        <fullName evidence="1">Phosphoribosylformylglycinamidine synthase subunit II</fullName>
    </alternativeName>
</protein>
<evidence type="ECO:0000255" key="1">
    <source>
        <dbReference type="HAMAP-Rule" id="MF_00420"/>
    </source>
</evidence>
<organism>
    <name type="scientific">Bacillus velezensis (strain DSM 23117 / BGSC 10A6 / LMG 26770 / FZB42)</name>
    <name type="common">Bacillus amyloliquefaciens subsp. plantarum</name>
    <dbReference type="NCBI Taxonomy" id="326423"/>
    <lineage>
        <taxon>Bacteria</taxon>
        <taxon>Bacillati</taxon>
        <taxon>Bacillota</taxon>
        <taxon>Bacilli</taxon>
        <taxon>Bacillales</taxon>
        <taxon>Bacillaceae</taxon>
        <taxon>Bacillus</taxon>
        <taxon>Bacillus amyloliquefaciens group</taxon>
    </lineage>
</organism>
<reference key="1">
    <citation type="journal article" date="2007" name="Nat. Biotechnol.">
        <title>Comparative analysis of the complete genome sequence of the plant growth-promoting bacterium Bacillus amyloliquefaciens FZB42.</title>
        <authorList>
            <person name="Chen X.H."/>
            <person name="Koumoutsi A."/>
            <person name="Scholz R."/>
            <person name="Eisenreich A."/>
            <person name="Schneider K."/>
            <person name="Heinemeyer I."/>
            <person name="Morgenstern B."/>
            <person name="Voss B."/>
            <person name="Hess W.R."/>
            <person name="Reva O."/>
            <person name="Junge H."/>
            <person name="Voigt B."/>
            <person name="Jungblut P.R."/>
            <person name="Vater J."/>
            <person name="Suessmuth R."/>
            <person name="Liesegang H."/>
            <person name="Strittmatter A."/>
            <person name="Gottschalk G."/>
            <person name="Borriss R."/>
        </authorList>
    </citation>
    <scope>NUCLEOTIDE SEQUENCE [LARGE SCALE GENOMIC DNA]</scope>
    <source>
        <strain>DSM 23117 / BGSC 10A6 / LMG 26770 / FZB42</strain>
    </source>
</reference>
<comment type="function">
    <text evidence="1">Part of the phosphoribosylformylglycinamidine synthase complex involved in the purines biosynthetic pathway. Catalyzes the ATP-dependent conversion of formylglycinamide ribonucleotide (FGAR) and glutamine to yield formylglycinamidine ribonucleotide (FGAM) and glutamate. The FGAM synthase complex is composed of three subunits. PurQ produces an ammonia molecule by converting glutamine to glutamate. PurL transfers the ammonia molecule to FGAR to form FGAM in an ATP-dependent manner. PurS interacts with PurQ and PurL and is thought to assist in the transfer of the ammonia molecule from PurQ to PurL.</text>
</comment>
<comment type="catalytic activity">
    <reaction evidence="1">
        <text>N(2)-formyl-N(1)-(5-phospho-beta-D-ribosyl)glycinamide + L-glutamine + ATP + H2O = 2-formamido-N(1)-(5-O-phospho-beta-D-ribosyl)acetamidine + L-glutamate + ADP + phosphate + H(+)</text>
        <dbReference type="Rhea" id="RHEA:17129"/>
        <dbReference type="ChEBI" id="CHEBI:15377"/>
        <dbReference type="ChEBI" id="CHEBI:15378"/>
        <dbReference type="ChEBI" id="CHEBI:29985"/>
        <dbReference type="ChEBI" id="CHEBI:30616"/>
        <dbReference type="ChEBI" id="CHEBI:43474"/>
        <dbReference type="ChEBI" id="CHEBI:58359"/>
        <dbReference type="ChEBI" id="CHEBI:147286"/>
        <dbReference type="ChEBI" id="CHEBI:147287"/>
        <dbReference type="ChEBI" id="CHEBI:456216"/>
        <dbReference type="EC" id="6.3.5.3"/>
    </reaction>
</comment>
<comment type="pathway">
    <text evidence="1">Purine metabolism; IMP biosynthesis via de novo pathway; 5-amino-1-(5-phospho-D-ribosyl)imidazole from N(2)-formyl-N(1)-(5-phospho-D-ribosyl)glycinamide: step 1/2.</text>
</comment>
<comment type="subunit">
    <text evidence="1">Monomer. Part of the FGAM synthase complex composed of 1 PurL, 1 PurQ and 2 PurS subunits.</text>
</comment>
<comment type="subcellular location">
    <subcellularLocation>
        <location evidence="1">Cytoplasm</location>
    </subcellularLocation>
</comment>
<comment type="similarity">
    <text evidence="1">Belongs to the FGAMS family.</text>
</comment>
<gene>
    <name evidence="1" type="primary">purL</name>
    <name type="ordered locus">RBAM_006900</name>
</gene>
<sequence length="742" mass="80111">MSLLLEPSKEQIKEEKLYQQMGVSDDEFALIESIIGRLPNYTEIGIFSVMWSEHCSYKNSKPVLRKFPTSGERVLQGPGEGAGIVDIGDNQAVVFKIESHNHPSAIEPYQGAATGVGGIIRDVFSMGARPIAVLNSLRFGELTSPRVKYLFEEVVAGIAGYGNCIGIPTVGGEVQFDASYEGNPLVNAMCVGLIDHKDIKKGQAKGVGNTVMYVGAKTGRDGIHGATFASEEMSDSSEEKRSAVQVGDPFMEKLLLEACLEVIQCDALVGIQDMGAAGLTSSSAEMASKAGSGIEMNLDLIPQRETGMTAYEMMLSESQERMLLVIERGREQEIVDIFDKYDLEAVSVGHVTDDKMLRLRHNGEVVCELPVDALAEEAPVYHKPSAEPAYYREFQETEAPAPEVKDATETLFALLQQPTIASKEWVYDQYDYMVRTNTVVAPGSDAGVLRIRGTKKALAMTTDCNARYLYLDPEEGGKIAVAEAARNIVCSGAEPLAVTDNLNFGNPEKPEIFWQIEKAADGISEACNVLSTPVIGGNVSLYNESNGTAIYPTPVIGMVGLIEDTAHITTQHFKQAGDLVYVIGETKPEFAGSELQKMTEGRIYGKAPQIDLDIELSRQKALLDAIKKGFVQSAHDVSEGGLGVAIAESVMTTENLGANVTVEGEAALLFSESQSRFVVSVKKEHQAAFEAAVADAVHIGEVTADGLLAIQNQDGQQLVHAQTKELERAWKGAIPCLLKSKA</sequence>
<accession>A7Z249</accession>
<dbReference type="EC" id="6.3.5.3" evidence="1"/>
<dbReference type="EMBL" id="CP000560">
    <property type="protein sequence ID" value="ABS73075.1"/>
    <property type="molecule type" value="Genomic_DNA"/>
</dbReference>
<dbReference type="RefSeq" id="WP_012116997.1">
    <property type="nucleotide sequence ID" value="NC_009725.2"/>
</dbReference>
<dbReference type="SMR" id="A7Z249"/>
<dbReference type="GeneID" id="93079824"/>
<dbReference type="KEGG" id="bay:RBAM_006900"/>
<dbReference type="HOGENOM" id="CLU_003100_0_1_9"/>
<dbReference type="UniPathway" id="UPA00074">
    <property type="reaction ID" value="UER00128"/>
</dbReference>
<dbReference type="Proteomes" id="UP000001120">
    <property type="component" value="Chromosome"/>
</dbReference>
<dbReference type="GO" id="GO:0005737">
    <property type="term" value="C:cytoplasm"/>
    <property type="evidence" value="ECO:0007669"/>
    <property type="project" value="UniProtKB-SubCell"/>
</dbReference>
<dbReference type="GO" id="GO:0005524">
    <property type="term" value="F:ATP binding"/>
    <property type="evidence" value="ECO:0007669"/>
    <property type="project" value="UniProtKB-UniRule"/>
</dbReference>
<dbReference type="GO" id="GO:0000287">
    <property type="term" value="F:magnesium ion binding"/>
    <property type="evidence" value="ECO:0007669"/>
    <property type="project" value="UniProtKB-UniRule"/>
</dbReference>
<dbReference type="GO" id="GO:0004642">
    <property type="term" value="F:phosphoribosylformylglycinamidine synthase activity"/>
    <property type="evidence" value="ECO:0007669"/>
    <property type="project" value="UniProtKB-UniRule"/>
</dbReference>
<dbReference type="GO" id="GO:0006189">
    <property type="term" value="P:'de novo' IMP biosynthetic process"/>
    <property type="evidence" value="ECO:0007669"/>
    <property type="project" value="UniProtKB-UniRule"/>
</dbReference>
<dbReference type="CDD" id="cd02203">
    <property type="entry name" value="PurL_repeat1"/>
    <property type="match status" value="1"/>
</dbReference>
<dbReference type="CDD" id="cd02204">
    <property type="entry name" value="PurL_repeat2"/>
    <property type="match status" value="1"/>
</dbReference>
<dbReference type="FunFam" id="3.30.1330.10:FF:000004">
    <property type="entry name" value="Phosphoribosylformylglycinamidine synthase subunit PurL"/>
    <property type="match status" value="1"/>
</dbReference>
<dbReference type="FunFam" id="3.30.1330.10:FF:000011">
    <property type="entry name" value="Phosphoribosylformylglycinamidine synthase subunit PurL"/>
    <property type="match status" value="1"/>
</dbReference>
<dbReference type="FunFam" id="3.90.650.10:FF:000009">
    <property type="entry name" value="Phosphoribosylformylglycinamidine synthase subunit PurL"/>
    <property type="match status" value="1"/>
</dbReference>
<dbReference type="FunFam" id="3.90.650.10:FF:000013">
    <property type="entry name" value="Phosphoribosylformylglycinamidine synthase subunit PurL"/>
    <property type="match status" value="1"/>
</dbReference>
<dbReference type="Gene3D" id="3.90.650.10">
    <property type="entry name" value="PurM-like C-terminal domain"/>
    <property type="match status" value="2"/>
</dbReference>
<dbReference type="Gene3D" id="3.30.1330.10">
    <property type="entry name" value="PurM-like, N-terminal domain"/>
    <property type="match status" value="2"/>
</dbReference>
<dbReference type="HAMAP" id="MF_00420">
    <property type="entry name" value="PurL_2"/>
    <property type="match status" value="1"/>
</dbReference>
<dbReference type="InterPro" id="IPR010074">
    <property type="entry name" value="PRibForGlyAmidine_synth_PurL"/>
</dbReference>
<dbReference type="InterPro" id="IPR041609">
    <property type="entry name" value="PurL_linker"/>
</dbReference>
<dbReference type="InterPro" id="IPR010918">
    <property type="entry name" value="PurM-like_C_dom"/>
</dbReference>
<dbReference type="InterPro" id="IPR036676">
    <property type="entry name" value="PurM-like_C_sf"/>
</dbReference>
<dbReference type="InterPro" id="IPR016188">
    <property type="entry name" value="PurM-like_N"/>
</dbReference>
<dbReference type="InterPro" id="IPR036921">
    <property type="entry name" value="PurM-like_N_sf"/>
</dbReference>
<dbReference type="NCBIfam" id="TIGR01736">
    <property type="entry name" value="FGAM_synth_II"/>
    <property type="match status" value="1"/>
</dbReference>
<dbReference type="NCBIfam" id="NF002290">
    <property type="entry name" value="PRK01213.1"/>
    <property type="match status" value="1"/>
</dbReference>
<dbReference type="PANTHER" id="PTHR43555">
    <property type="entry name" value="PHOSPHORIBOSYLFORMYLGLYCINAMIDINE SYNTHASE SUBUNIT PURL"/>
    <property type="match status" value="1"/>
</dbReference>
<dbReference type="PANTHER" id="PTHR43555:SF1">
    <property type="entry name" value="PHOSPHORIBOSYLFORMYLGLYCINAMIDINE SYNTHASE SUBUNIT PURL"/>
    <property type="match status" value="1"/>
</dbReference>
<dbReference type="Pfam" id="PF00586">
    <property type="entry name" value="AIRS"/>
    <property type="match status" value="2"/>
</dbReference>
<dbReference type="Pfam" id="PF02769">
    <property type="entry name" value="AIRS_C"/>
    <property type="match status" value="2"/>
</dbReference>
<dbReference type="Pfam" id="PF18072">
    <property type="entry name" value="FGAR-AT_linker"/>
    <property type="match status" value="1"/>
</dbReference>
<dbReference type="PIRSF" id="PIRSF001587">
    <property type="entry name" value="FGAM_synthase_II"/>
    <property type="match status" value="1"/>
</dbReference>
<dbReference type="SUPFAM" id="SSF56042">
    <property type="entry name" value="PurM C-terminal domain-like"/>
    <property type="match status" value="2"/>
</dbReference>
<dbReference type="SUPFAM" id="SSF55326">
    <property type="entry name" value="PurM N-terminal domain-like"/>
    <property type="match status" value="2"/>
</dbReference>